<accession>Q39DG4</accession>
<feature type="chain" id="PRO_0000362116" description="Kynurenine formamidase">
    <location>
        <begin position="1"/>
        <end position="213"/>
    </location>
</feature>
<feature type="active site" description="Proton donor/acceptor" evidence="1">
    <location>
        <position position="58"/>
    </location>
</feature>
<feature type="binding site" evidence="1">
    <location>
        <position position="18"/>
    </location>
    <ligand>
        <name>substrate</name>
    </ligand>
</feature>
<feature type="binding site" evidence="1">
    <location>
        <position position="48"/>
    </location>
    <ligand>
        <name>Zn(2+)</name>
        <dbReference type="ChEBI" id="CHEBI:29105"/>
        <label>1</label>
    </ligand>
</feature>
<feature type="binding site" evidence="1">
    <location>
        <position position="52"/>
    </location>
    <ligand>
        <name>Zn(2+)</name>
        <dbReference type="ChEBI" id="CHEBI:29105"/>
        <label>1</label>
    </ligand>
</feature>
<feature type="binding site" evidence="1">
    <location>
        <position position="54"/>
    </location>
    <ligand>
        <name>Zn(2+)</name>
        <dbReference type="ChEBI" id="CHEBI:29105"/>
        <label>1</label>
    </ligand>
</feature>
<feature type="binding site" evidence="1">
    <location>
        <position position="54"/>
    </location>
    <ligand>
        <name>Zn(2+)</name>
        <dbReference type="ChEBI" id="CHEBI:29105"/>
        <label>2</label>
    </ligand>
</feature>
<feature type="binding site" evidence="1">
    <location>
        <position position="160"/>
    </location>
    <ligand>
        <name>Zn(2+)</name>
        <dbReference type="ChEBI" id="CHEBI:29105"/>
        <label>2</label>
    </ligand>
</feature>
<feature type="binding site" evidence="1">
    <location>
        <position position="172"/>
    </location>
    <ligand>
        <name>Zn(2+)</name>
        <dbReference type="ChEBI" id="CHEBI:29105"/>
        <label>1</label>
    </ligand>
</feature>
<feature type="binding site" evidence="1">
    <location>
        <position position="172"/>
    </location>
    <ligand>
        <name>Zn(2+)</name>
        <dbReference type="ChEBI" id="CHEBI:29105"/>
        <label>2</label>
    </ligand>
</feature>
<name>KYNB_BURL3</name>
<proteinExistence type="inferred from homology"/>
<dbReference type="EC" id="3.5.1.9" evidence="1"/>
<dbReference type="EMBL" id="CP000151">
    <property type="protein sequence ID" value="ABB09502.1"/>
    <property type="molecule type" value="Genomic_DNA"/>
</dbReference>
<dbReference type="RefSeq" id="WP_011353018.1">
    <property type="nucleotide sequence ID" value="NC_007510.1"/>
</dbReference>
<dbReference type="SMR" id="Q39DG4"/>
<dbReference type="GeneID" id="45095791"/>
<dbReference type="KEGG" id="bur:Bcep18194_A5908"/>
<dbReference type="PATRIC" id="fig|482957.22.peg.2900"/>
<dbReference type="HOGENOM" id="CLU_030671_3_1_4"/>
<dbReference type="UniPathway" id="UPA00333">
    <property type="reaction ID" value="UER00454"/>
</dbReference>
<dbReference type="Proteomes" id="UP000002705">
    <property type="component" value="Chromosome 1"/>
</dbReference>
<dbReference type="GO" id="GO:0004061">
    <property type="term" value="F:arylformamidase activity"/>
    <property type="evidence" value="ECO:0000250"/>
    <property type="project" value="UniProtKB"/>
</dbReference>
<dbReference type="GO" id="GO:0004328">
    <property type="term" value="F:formamidase activity"/>
    <property type="evidence" value="ECO:0007669"/>
    <property type="project" value="InterPro"/>
</dbReference>
<dbReference type="GO" id="GO:0008270">
    <property type="term" value="F:zinc ion binding"/>
    <property type="evidence" value="ECO:0007669"/>
    <property type="project" value="UniProtKB-UniRule"/>
</dbReference>
<dbReference type="GO" id="GO:0043420">
    <property type="term" value="P:anthranilate metabolic process"/>
    <property type="evidence" value="ECO:0000250"/>
    <property type="project" value="UniProtKB"/>
</dbReference>
<dbReference type="GO" id="GO:0019441">
    <property type="term" value="P:L-tryptophan catabolic process to kynurenine"/>
    <property type="evidence" value="ECO:0000250"/>
    <property type="project" value="UniProtKB"/>
</dbReference>
<dbReference type="FunFam" id="3.50.30.50:FF:000001">
    <property type="entry name" value="Kynurenine formamidase"/>
    <property type="match status" value="1"/>
</dbReference>
<dbReference type="Gene3D" id="3.50.30.50">
    <property type="entry name" value="Putative cyclase"/>
    <property type="match status" value="1"/>
</dbReference>
<dbReference type="HAMAP" id="MF_01969">
    <property type="entry name" value="KynB"/>
    <property type="match status" value="1"/>
</dbReference>
<dbReference type="InterPro" id="IPR007325">
    <property type="entry name" value="KFase/CYL"/>
</dbReference>
<dbReference type="InterPro" id="IPR037175">
    <property type="entry name" value="KFase_sf"/>
</dbReference>
<dbReference type="InterPro" id="IPR017484">
    <property type="entry name" value="Kynurenine_formamidase_bac"/>
</dbReference>
<dbReference type="NCBIfam" id="TIGR03035">
    <property type="entry name" value="trp_arylform"/>
    <property type="match status" value="1"/>
</dbReference>
<dbReference type="PANTHER" id="PTHR31118">
    <property type="entry name" value="CYCLASE-LIKE PROTEIN 2"/>
    <property type="match status" value="1"/>
</dbReference>
<dbReference type="PANTHER" id="PTHR31118:SF32">
    <property type="entry name" value="KYNURENINE FORMAMIDASE"/>
    <property type="match status" value="1"/>
</dbReference>
<dbReference type="Pfam" id="PF04199">
    <property type="entry name" value="Cyclase"/>
    <property type="match status" value="1"/>
</dbReference>
<dbReference type="SUPFAM" id="SSF102198">
    <property type="entry name" value="Putative cyclase"/>
    <property type="match status" value="1"/>
</dbReference>
<gene>
    <name evidence="1" type="primary">kynB</name>
    <name type="ordered locus">Bcep18194_A5908</name>
</gene>
<sequence length="213" mass="22707">MDTLWDISPPVSPATPVWPGDTPVSVERVWRMEAGSPVNVARLTLSPHTGAHCDAPLHYDADGAPIGAVPLDTYLGPCRVIHCIGASPVVQPVDVAAALDGVPPRVLLRTYARASVEQWDSHFCAVAPETVDLLAAHGVKLIGIDTPSLDPQESKTMDAHHRVRAHRMAILEGIVLDDVPPGDYELIALPLKFATLDASPVRAVLRALPARAS</sequence>
<protein>
    <recommendedName>
        <fullName evidence="1">Kynurenine formamidase</fullName>
        <shortName evidence="1">KFA</shortName>
        <shortName evidence="1">KFase</shortName>
        <ecNumber evidence="1">3.5.1.9</ecNumber>
    </recommendedName>
    <alternativeName>
        <fullName evidence="1">Arylformamidase</fullName>
    </alternativeName>
    <alternativeName>
        <fullName evidence="1">N-formylkynurenine formamidase</fullName>
        <shortName evidence="1">FKF</shortName>
    </alternativeName>
</protein>
<organism>
    <name type="scientific">Burkholderia lata (strain ATCC 17760 / DSM 23089 / LMG 22485 / NCIMB 9086 / R18194 / 383)</name>
    <dbReference type="NCBI Taxonomy" id="482957"/>
    <lineage>
        <taxon>Bacteria</taxon>
        <taxon>Pseudomonadati</taxon>
        <taxon>Pseudomonadota</taxon>
        <taxon>Betaproteobacteria</taxon>
        <taxon>Burkholderiales</taxon>
        <taxon>Burkholderiaceae</taxon>
        <taxon>Burkholderia</taxon>
        <taxon>Burkholderia cepacia complex</taxon>
    </lineage>
</organism>
<evidence type="ECO:0000255" key="1">
    <source>
        <dbReference type="HAMAP-Rule" id="MF_01969"/>
    </source>
</evidence>
<comment type="function">
    <text evidence="1">Catalyzes the hydrolysis of N-formyl-L-kynurenine to L-kynurenine, the second step in the kynurenine pathway of tryptophan degradation.</text>
</comment>
<comment type="catalytic activity">
    <reaction evidence="1">
        <text>N-formyl-L-kynurenine + H2O = L-kynurenine + formate + H(+)</text>
        <dbReference type="Rhea" id="RHEA:13009"/>
        <dbReference type="ChEBI" id="CHEBI:15377"/>
        <dbReference type="ChEBI" id="CHEBI:15378"/>
        <dbReference type="ChEBI" id="CHEBI:15740"/>
        <dbReference type="ChEBI" id="CHEBI:57959"/>
        <dbReference type="ChEBI" id="CHEBI:58629"/>
        <dbReference type="EC" id="3.5.1.9"/>
    </reaction>
</comment>
<comment type="cofactor">
    <cofactor evidence="1">
        <name>Zn(2+)</name>
        <dbReference type="ChEBI" id="CHEBI:29105"/>
    </cofactor>
    <text evidence="1">Binds 2 zinc ions per subunit.</text>
</comment>
<comment type="pathway">
    <text evidence="1">Amino-acid degradation; L-tryptophan degradation via kynurenine pathway; L-kynurenine from L-tryptophan: step 2/2.</text>
</comment>
<comment type="subunit">
    <text evidence="1">Homodimer.</text>
</comment>
<comment type="similarity">
    <text evidence="1">Belongs to the Cyclase 1 superfamily. KynB family.</text>
</comment>
<reference key="1">
    <citation type="submission" date="2005-10" db="EMBL/GenBank/DDBJ databases">
        <title>Complete sequence of chromosome 1 of Burkholderia sp. 383.</title>
        <authorList>
            <consortium name="US DOE Joint Genome Institute"/>
            <person name="Copeland A."/>
            <person name="Lucas S."/>
            <person name="Lapidus A."/>
            <person name="Barry K."/>
            <person name="Detter J.C."/>
            <person name="Glavina T."/>
            <person name="Hammon N."/>
            <person name="Israni S."/>
            <person name="Pitluck S."/>
            <person name="Chain P."/>
            <person name="Malfatti S."/>
            <person name="Shin M."/>
            <person name="Vergez L."/>
            <person name="Schmutz J."/>
            <person name="Larimer F."/>
            <person name="Land M."/>
            <person name="Kyrpides N."/>
            <person name="Lykidis A."/>
            <person name="Richardson P."/>
        </authorList>
    </citation>
    <scope>NUCLEOTIDE SEQUENCE [LARGE SCALE GENOMIC DNA]</scope>
    <source>
        <strain>ATCC 17760 / DSM 23089 / LMG 22485 / NCIMB 9086 / R18194 / 383</strain>
    </source>
</reference>
<keyword id="KW-0378">Hydrolase</keyword>
<keyword id="KW-0479">Metal-binding</keyword>
<keyword id="KW-0823">Tryptophan catabolism</keyword>
<keyword id="KW-0862">Zinc</keyword>